<keyword id="KW-0067">ATP-binding</keyword>
<keyword id="KW-0460">Magnesium</keyword>
<keyword id="KW-0547">Nucleotide-binding</keyword>
<keyword id="KW-0808">Transferase</keyword>
<keyword id="KW-0819">tRNA processing</keyword>
<evidence type="ECO:0000255" key="1">
    <source>
        <dbReference type="HAMAP-Rule" id="MF_00185"/>
    </source>
</evidence>
<dbReference type="EC" id="2.5.1.75" evidence="1"/>
<dbReference type="EMBL" id="CP001182">
    <property type="protein sequence ID" value="ACJ42558.1"/>
    <property type="molecule type" value="Genomic_DNA"/>
</dbReference>
<dbReference type="RefSeq" id="WP_000070779.1">
    <property type="nucleotide sequence ID" value="NC_011586.2"/>
</dbReference>
<dbReference type="SMR" id="B7IAP6"/>
<dbReference type="GeneID" id="92894356"/>
<dbReference type="KEGG" id="abn:AB57_2447"/>
<dbReference type="HOGENOM" id="CLU_032616_0_0_6"/>
<dbReference type="Proteomes" id="UP000007094">
    <property type="component" value="Chromosome"/>
</dbReference>
<dbReference type="GO" id="GO:0005524">
    <property type="term" value="F:ATP binding"/>
    <property type="evidence" value="ECO:0007669"/>
    <property type="project" value="UniProtKB-UniRule"/>
</dbReference>
<dbReference type="GO" id="GO:0052381">
    <property type="term" value="F:tRNA dimethylallyltransferase activity"/>
    <property type="evidence" value="ECO:0007669"/>
    <property type="project" value="UniProtKB-UniRule"/>
</dbReference>
<dbReference type="GO" id="GO:0006400">
    <property type="term" value="P:tRNA modification"/>
    <property type="evidence" value="ECO:0007669"/>
    <property type="project" value="TreeGrafter"/>
</dbReference>
<dbReference type="FunFam" id="1.10.20.140:FF:000001">
    <property type="entry name" value="tRNA dimethylallyltransferase"/>
    <property type="match status" value="1"/>
</dbReference>
<dbReference type="Gene3D" id="1.10.20.140">
    <property type="match status" value="1"/>
</dbReference>
<dbReference type="Gene3D" id="3.40.50.300">
    <property type="entry name" value="P-loop containing nucleotide triphosphate hydrolases"/>
    <property type="match status" value="1"/>
</dbReference>
<dbReference type="HAMAP" id="MF_00185">
    <property type="entry name" value="IPP_trans"/>
    <property type="match status" value="1"/>
</dbReference>
<dbReference type="InterPro" id="IPR039657">
    <property type="entry name" value="Dimethylallyltransferase"/>
</dbReference>
<dbReference type="InterPro" id="IPR018022">
    <property type="entry name" value="IPT"/>
</dbReference>
<dbReference type="InterPro" id="IPR027417">
    <property type="entry name" value="P-loop_NTPase"/>
</dbReference>
<dbReference type="NCBIfam" id="TIGR00174">
    <property type="entry name" value="miaA"/>
    <property type="match status" value="1"/>
</dbReference>
<dbReference type="PANTHER" id="PTHR11088">
    <property type="entry name" value="TRNA DIMETHYLALLYLTRANSFERASE"/>
    <property type="match status" value="1"/>
</dbReference>
<dbReference type="PANTHER" id="PTHR11088:SF60">
    <property type="entry name" value="TRNA DIMETHYLALLYLTRANSFERASE"/>
    <property type="match status" value="1"/>
</dbReference>
<dbReference type="Pfam" id="PF01715">
    <property type="entry name" value="IPPT"/>
    <property type="match status" value="1"/>
</dbReference>
<dbReference type="SUPFAM" id="SSF52540">
    <property type="entry name" value="P-loop containing nucleoside triphosphate hydrolases"/>
    <property type="match status" value="2"/>
</dbReference>
<reference key="1">
    <citation type="journal article" date="2008" name="J. Bacteriol.">
        <title>Comparative genome sequence analysis of multidrug-resistant Acinetobacter baumannii.</title>
        <authorList>
            <person name="Adams M.D."/>
            <person name="Goglin K."/>
            <person name="Molyneaux N."/>
            <person name="Hujer K.M."/>
            <person name="Lavender H."/>
            <person name="Jamison J.J."/>
            <person name="MacDonald I.J."/>
            <person name="Martin K.M."/>
            <person name="Russo T."/>
            <person name="Campagnari A.A."/>
            <person name="Hujer A.M."/>
            <person name="Bonomo R.A."/>
            <person name="Gill S.R."/>
        </authorList>
    </citation>
    <scope>NUCLEOTIDE SEQUENCE [LARGE SCALE GENOMIC DNA]</scope>
    <source>
        <strain>AB0057</strain>
    </source>
</reference>
<protein>
    <recommendedName>
        <fullName evidence="1">tRNA dimethylallyltransferase</fullName>
        <ecNumber evidence="1">2.5.1.75</ecNumber>
    </recommendedName>
    <alternativeName>
        <fullName evidence="1">Dimethylallyl diphosphate:tRNA dimethylallyltransferase</fullName>
        <shortName evidence="1">DMAPP:tRNA dimethylallyltransferase</shortName>
        <shortName evidence="1">DMATase</shortName>
    </alternativeName>
    <alternativeName>
        <fullName evidence="1">Isopentenyl-diphosphate:tRNA isopentenyltransferase</fullName>
        <shortName evidence="1">IPP transferase</shortName>
        <shortName evidence="1">IPPT</shortName>
        <shortName evidence="1">IPTase</shortName>
    </alternativeName>
</protein>
<name>MIAA_ACIB5</name>
<gene>
    <name evidence="1" type="primary">miaA</name>
    <name type="ordered locus">AB57_2447</name>
</gene>
<accession>B7IAP6</accession>
<comment type="function">
    <text evidence="1">Catalyzes the transfer of a dimethylallyl group onto the adenine at position 37 in tRNAs that read codons beginning with uridine, leading to the formation of N6-(dimethylallyl)adenosine (i(6)A).</text>
</comment>
<comment type="catalytic activity">
    <reaction evidence="1">
        <text>adenosine(37) in tRNA + dimethylallyl diphosphate = N(6)-dimethylallyladenosine(37) in tRNA + diphosphate</text>
        <dbReference type="Rhea" id="RHEA:26482"/>
        <dbReference type="Rhea" id="RHEA-COMP:10162"/>
        <dbReference type="Rhea" id="RHEA-COMP:10375"/>
        <dbReference type="ChEBI" id="CHEBI:33019"/>
        <dbReference type="ChEBI" id="CHEBI:57623"/>
        <dbReference type="ChEBI" id="CHEBI:74411"/>
        <dbReference type="ChEBI" id="CHEBI:74415"/>
        <dbReference type="EC" id="2.5.1.75"/>
    </reaction>
</comment>
<comment type="cofactor">
    <cofactor evidence="1">
        <name>Mg(2+)</name>
        <dbReference type="ChEBI" id="CHEBI:18420"/>
    </cofactor>
</comment>
<comment type="subunit">
    <text evidence="1">Monomer.</text>
</comment>
<comment type="similarity">
    <text evidence="1">Belongs to the IPP transferase family.</text>
</comment>
<sequence>MSNQLPVINLMGPTASGKTALACELYERGNFELISVDSALVYKDMDIGTAKPTREEQELYPHHLIDIITPLEVYSAAQFVEDACALIDEMHSRGKTPILVGGTMLYFKALLEGLSSNLPSADANVRAAIEEKAANEGWQAVYDELVAVDPAAGVKFKVSDKQRIIRALEVYRITGQPITKLQAEQPKNVPYRYTFHNYALLPDRLELHQRIEQRLSKMWDIGFLSEVESLIEKYDLDENLPSMRSVGYRQALEFLLKSDMSLKKKQEMEDKALFATRQLAKRQYTWLRSLQEIHDFKTYLTIKQAKEDLRNSYG</sequence>
<proteinExistence type="inferred from homology"/>
<feature type="chain" id="PRO_1000118513" description="tRNA dimethylallyltransferase">
    <location>
        <begin position="1"/>
        <end position="314"/>
    </location>
</feature>
<feature type="region of interest" description="Interaction with substrate tRNA" evidence="1">
    <location>
        <begin position="37"/>
        <end position="40"/>
    </location>
</feature>
<feature type="region of interest" description="Interaction with substrate tRNA" evidence="1">
    <location>
        <begin position="162"/>
        <end position="166"/>
    </location>
</feature>
<feature type="binding site" evidence="1">
    <location>
        <begin position="12"/>
        <end position="19"/>
    </location>
    <ligand>
        <name>ATP</name>
        <dbReference type="ChEBI" id="CHEBI:30616"/>
    </ligand>
</feature>
<feature type="binding site" evidence="1">
    <location>
        <begin position="14"/>
        <end position="19"/>
    </location>
    <ligand>
        <name>substrate</name>
    </ligand>
</feature>
<feature type="site" description="Interaction with substrate tRNA" evidence="1">
    <location>
        <position position="103"/>
    </location>
</feature>
<feature type="site" description="Interaction with substrate tRNA" evidence="1">
    <location>
        <position position="126"/>
    </location>
</feature>
<organism>
    <name type="scientific">Acinetobacter baumannii (strain AB0057)</name>
    <dbReference type="NCBI Taxonomy" id="480119"/>
    <lineage>
        <taxon>Bacteria</taxon>
        <taxon>Pseudomonadati</taxon>
        <taxon>Pseudomonadota</taxon>
        <taxon>Gammaproteobacteria</taxon>
        <taxon>Moraxellales</taxon>
        <taxon>Moraxellaceae</taxon>
        <taxon>Acinetobacter</taxon>
        <taxon>Acinetobacter calcoaceticus/baumannii complex</taxon>
    </lineage>
</organism>